<dbReference type="EC" id="2.5.1.7" evidence="1"/>
<dbReference type="EMBL" id="CP001013">
    <property type="protein sequence ID" value="ACB33852.1"/>
    <property type="molecule type" value="Genomic_DNA"/>
</dbReference>
<dbReference type="RefSeq" id="WP_012346613.1">
    <property type="nucleotide sequence ID" value="NC_010524.1"/>
</dbReference>
<dbReference type="SMR" id="B1XX71"/>
<dbReference type="STRING" id="395495.Lcho_1585"/>
<dbReference type="KEGG" id="lch:Lcho_1585"/>
<dbReference type="eggNOG" id="COG0766">
    <property type="taxonomic scope" value="Bacteria"/>
</dbReference>
<dbReference type="HOGENOM" id="CLU_027387_0_0_4"/>
<dbReference type="OrthoDB" id="9803760at2"/>
<dbReference type="UniPathway" id="UPA00219"/>
<dbReference type="Proteomes" id="UP000001693">
    <property type="component" value="Chromosome"/>
</dbReference>
<dbReference type="GO" id="GO:0005737">
    <property type="term" value="C:cytoplasm"/>
    <property type="evidence" value="ECO:0007669"/>
    <property type="project" value="UniProtKB-SubCell"/>
</dbReference>
<dbReference type="GO" id="GO:0008760">
    <property type="term" value="F:UDP-N-acetylglucosamine 1-carboxyvinyltransferase activity"/>
    <property type="evidence" value="ECO:0007669"/>
    <property type="project" value="UniProtKB-UniRule"/>
</dbReference>
<dbReference type="GO" id="GO:0051301">
    <property type="term" value="P:cell division"/>
    <property type="evidence" value="ECO:0007669"/>
    <property type="project" value="UniProtKB-KW"/>
</dbReference>
<dbReference type="GO" id="GO:0071555">
    <property type="term" value="P:cell wall organization"/>
    <property type="evidence" value="ECO:0007669"/>
    <property type="project" value="UniProtKB-KW"/>
</dbReference>
<dbReference type="GO" id="GO:0009252">
    <property type="term" value="P:peptidoglycan biosynthetic process"/>
    <property type="evidence" value="ECO:0007669"/>
    <property type="project" value="UniProtKB-UniRule"/>
</dbReference>
<dbReference type="GO" id="GO:0008360">
    <property type="term" value="P:regulation of cell shape"/>
    <property type="evidence" value="ECO:0007669"/>
    <property type="project" value="UniProtKB-KW"/>
</dbReference>
<dbReference type="GO" id="GO:0019277">
    <property type="term" value="P:UDP-N-acetylgalactosamine biosynthetic process"/>
    <property type="evidence" value="ECO:0007669"/>
    <property type="project" value="InterPro"/>
</dbReference>
<dbReference type="CDD" id="cd01555">
    <property type="entry name" value="UdpNAET"/>
    <property type="match status" value="1"/>
</dbReference>
<dbReference type="FunFam" id="3.65.10.10:FF:000001">
    <property type="entry name" value="UDP-N-acetylglucosamine 1-carboxyvinyltransferase"/>
    <property type="match status" value="1"/>
</dbReference>
<dbReference type="Gene3D" id="3.65.10.10">
    <property type="entry name" value="Enolpyruvate transferase domain"/>
    <property type="match status" value="2"/>
</dbReference>
<dbReference type="HAMAP" id="MF_00111">
    <property type="entry name" value="MurA"/>
    <property type="match status" value="1"/>
</dbReference>
<dbReference type="InterPro" id="IPR001986">
    <property type="entry name" value="Enolpyruvate_Tfrase_dom"/>
</dbReference>
<dbReference type="InterPro" id="IPR036968">
    <property type="entry name" value="Enolpyruvate_Tfrase_sf"/>
</dbReference>
<dbReference type="InterPro" id="IPR050068">
    <property type="entry name" value="MurA_subfamily"/>
</dbReference>
<dbReference type="InterPro" id="IPR013792">
    <property type="entry name" value="RNA3'P_cycl/enolpyr_Trfase_a/b"/>
</dbReference>
<dbReference type="InterPro" id="IPR005750">
    <property type="entry name" value="UDP_GlcNAc_COvinyl_MurA"/>
</dbReference>
<dbReference type="NCBIfam" id="TIGR01072">
    <property type="entry name" value="murA"/>
    <property type="match status" value="1"/>
</dbReference>
<dbReference type="NCBIfam" id="NF006873">
    <property type="entry name" value="PRK09369.1"/>
    <property type="match status" value="1"/>
</dbReference>
<dbReference type="PANTHER" id="PTHR43783">
    <property type="entry name" value="UDP-N-ACETYLGLUCOSAMINE 1-CARBOXYVINYLTRANSFERASE"/>
    <property type="match status" value="1"/>
</dbReference>
<dbReference type="PANTHER" id="PTHR43783:SF1">
    <property type="entry name" value="UDP-N-ACETYLGLUCOSAMINE 1-CARBOXYVINYLTRANSFERASE"/>
    <property type="match status" value="1"/>
</dbReference>
<dbReference type="Pfam" id="PF00275">
    <property type="entry name" value="EPSP_synthase"/>
    <property type="match status" value="1"/>
</dbReference>
<dbReference type="SUPFAM" id="SSF55205">
    <property type="entry name" value="EPT/RTPC-like"/>
    <property type="match status" value="1"/>
</dbReference>
<proteinExistence type="inferred from homology"/>
<organism>
    <name type="scientific">Leptothrix cholodnii (strain ATCC 51168 / LMG 8142 / SP-6)</name>
    <name type="common">Leptothrix discophora (strain SP-6)</name>
    <dbReference type="NCBI Taxonomy" id="395495"/>
    <lineage>
        <taxon>Bacteria</taxon>
        <taxon>Pseudomonadati</taxon>
        <taxon>Pseudomonadota</taxon>
        <taxon>Betaproteobacteria</taxon>
        <taxon>Burkholderiales</taxon>
        <taxon>Sphaerotilaceae</taxon>
        <taxon>Leptothrix</taxon>
    </lineage>
</organism>
<reference key="1">
    <citation type="submission" date="2008-03" db="EMBL/GenBank/DDBJ databases">
        <title>Complete sequence of Leptothrix cholodnii SP-6.</title>
        <authorList>
            <consortium name="US DOE Joint Genome Institute"/>
            <person name="Copeland A."/>
            <person name="Lucas S."/>
            <person name="Lapidus A."/>
            <person name="Glavina del Rio T."/>
            <person name="Dalin E."/>
            <person name="Tice H."/>
            <person name="Bruce D."/>
            <person name="Goodwin L."/>
            <person name="Pitluck S."/>
            <person name="Chertkov O."/>
            <person name="Brettin T."/>
            <person name="Detter J.C."/>
            <person name="Han C."/>
            <person name="Kuske C.R."/>
            <person name="Schmutz J."/>
            <person name="Larimer F."/>
            <person name="Land M."/>
            <person name="Hauser L."/>
            <person name="Kyrpides N."/>
            <person name="Lykidis A."/>
            <person name="Emerson D."/>
            <person name="Richardson P."/>
        </authorList>
    </citation>
    <scope>NUCLEOTIDE SEQUENCE [LARGE SCALE GENOMIC DNA]</scope>
    <source>
        <strain>ATCC 51168 / LMG 8142 / SP-6</strain>
    </source>
</reference>
<comment type="function">
    <text evidence="1">Cell wall formation. Adds enolpyruvyl to UDP-N-acetylglucosamine.</text>
</comment>
<comment type="catalytic activity">
    <reaction evidence="1">
        <text>phosphoenolpyruvate + UDP-N-acetyl-alpha-D-glucosamine = UDP-N-acetyl-3-O-(1-carboxyvinyl)-alpha-D-glucosamine + phosphate</text>
        <dbReference type="Rhea" id="RHEA:18681"/>
        <dbReference type="ChEBI" id="CHEBI:43474"/>
        <dbReference type="ChEBI" id="CHEBI:57705"/>
        <dbReference type="ChEBI" id="CHEBI:58702"/>
        <dbReference type="ChEBI" id="CHEBI:68483"/>
        <dbReference type="EC" id="2.5.1.7"/>
    </reaction>
</comment>
<comment type="pathway">
    <text evidence="1">Cell wall biogenesis; peptidoglycan biosynthesis.</text>
</comment>
<comment type="subcellular location">
    <subcellularLocation>
        <location evidence="1">Cytoplasm</location>
    </subcellularLocation>
</comment>
<comment type="similarity">
    <text evidence="1">Belongs to the EPSP synthase family. MurA subfamily.</text>
</comment>
<name>MURA_LEPCP</name>
<keyword id="KW-0131">Cell cycle</keyword>
<keyword id="KW-0132">Cell division</keyword>
<keyword id="KW-0133">Cell shape</keyword>
<keyword id="KW-0961">Cell wall biogenesis/degradation</keyword>
<keyword id="KW-0963">Cytoplasm</keyword>
<keyword id="KW-0573">Peptidoglycan synthesis</keyword>
<keyword id="KW-0670">Pyruvate</keyword>
<keyword id="KW-1185">Reference proteome</keyword>
<keyword id="KW-0808">Transferase</keyword>
<sequence length="421" mass="45360">MDKLLIRGGRPLMGEVTISGAKNAALPELCAALLCPEPLTLANVPRLQDVGTTLKVLRHLGVEAERSAVLPDQVRLDATRITTREAPYELVKTMRASILVLGPLLARFGEARVSLPGGCAIGSRPVDQHIKGLQAMGAQIVVEHGYIVARAERLKGARITTDMVTVTGTENLLMAATLADGETVLENAAQEPEITDLAELLIAMGAQIEGQGTHRIRIQGVERLHAPAVPHQIIPDRIETGTFLCAVAATGGDVTLRRTRADHLDAVLDKLREACTELECGADWIRVRAAGRPKGVNLRTSEYPAFPTDMQAQFMALNCIAQGTSRVIETIFENRFMHVNELVRLGAHIAVDGHTAIVEGIARLSGATVMATDLRASASLVIAGLVAEGETTVERIYHLDRGYDQMETKLRGIGADIERIK</sequence>
<evidence type="ECO:0000255" key="1">
    <source>
        <dbReference type="HAMAP-Rule" id="MF_00111"/>
    </source>
</evidence>
<gene>
    <name evidence="1" type="primary">murA</name>
    <name type="ordered locus">Lcho_1585</name>
</gene>
<accession>B1XX71</accession>
<feature type="chain" id="PRO_1000094698" description="UDP-N-acetylglucosamine 1-carboxyvinyltransferase">
    <location>
        <begin position="1"/>
        <end position="421"/>
    </location>
</feature>
<feature type="active site" description="Proton donor" evidence="1">
    <location>
        <position position="119"/>
    </location>
</feature>
<feature type="binding site" evidence="1">
    <location>
        <begin position="22"/>
        <end position="23"/>
    </location>
    <ligand>
        <name>phosphoenolpyruvate</name>
        <dbReference type="ChEBI" id="CHEBI:58702"/>
    </ligand>
</feature>
<feature type="binding site" evidence="1">
    <location>
        <position position="95"/>
    </location>
    <ligand>
        <name>UDP-N-acetyl-alpha-D-glucosamine</name>
        <dbReference type="ChEBI" id="CHEBI:57705"/>
    </ligand>
</feature>
<feature type="binding site" evidence="1">
    <location>
        <begin position="124"/>
        <end position="128"/>
    </location>
    <ligand>
        <name>UDP-N-acetyl-alpha-D-glucosamine</name>
        <dbReference type="ChEBI" id="CHEBI:57705"/>
    </ligand>
</feature>
<feature type="binding site" evidence="1">
    <location>
        <position position="309"/>
    </location>
    <ligand>
        <name>UDP-N-acetyl-alpha-D-glucosamine</name>
        <dbReference type="ChEBI" id="CHEBI:57705"/>
    </ligand>
</feature>
<feature type="binding site" evidence="1">
    <location>
        <position position="331"/>
    </location>
    <ligand>
        <name>UDP-N-acetyl-alpha-D-glucosamine</name>
        <dbReference type="ChEBI" id="CHEBI:57705"/>
    </ligand>
</feature>
<feature type="modified residue" description="2-(S-cysteinyl)pyruvic acid O-phosphothioketal" evidence="1">
    <location>
        <position position="119"/>
    </location>
</feature>
<protein>
    <recommendedName>
        <fullName evidence="1">UDP-N-acetylglucosamine 1-carboxyvinyltransferase</fullName>
        <ecNumber evidence="1">2.5.1.7</ecNumber>
    </recommendedName>
    <alternativeName>
        <fullName evidence="1">Enoylpyruvate transferase</fullName>
    </alternativeName>
    <alternativeName>
        <fullName evidence="1">UDP-N-acetylglucosamine enolpyruvyl transferase</fullName>
        <shortName evidence="1">EPT</shortName>
    </alternativeName>
</protein>